<gene>
    <name evidence="1" type="primary">potA</name>
    <name type="ordered locus">Ldb0647</name>
</gene>
<keyword id="KW-0067">ATP-binding</keyword>
<keyword id="KW-1003">Cell membrane</keyword>
<keyword id="KW-0472">Membrane</keyword>
<keyword id="KW-0547">Nucleotide-binding</keyword>
<keyword id="KW-1185">Reference proteome</keyword>
<keyword id="KW-1278">Translocase</keyword>
<keyword id="KW-0813">Transport</keyword>
<sequence>MEIIKLDHITKQYDDGFVALKDINLELESGKFYSLLGPSGSGKTTILRIIAGFTEASAGKVYFDGQDITNLDASKRHINTVFQNYALFPHLNVYENVAFALKLRQRPESEIREKVKDALHTVRLDGYANREISELSGGQQQRVAIARAIINEPKVLLLDECLSALDKRLRKEMQFELRAIQKKLGITFIFVTHDQEEALAMSDEIFVLNDGEIKQSGSPVDIYDEPVNDFVARFIGDSNILSGRMIRDFAVEFAGKDFECADAGITPGEKVEVVLRPEDLDITAPAAGKLLVTVQSQLFLGDHFEIKAIGQDGFEWLIHSTNGVQIGQEVGIFFDPEDIHVMRLGETEEEFDARLETYEGED</sequence>
<organism>
    <name type="scientific">Lactobacillus delbrueckii subsp. bulgaricus (strain ATCC 11842 / DSM 20081 / BCRC 10696 / JCM 1002 / NBRC 13953 / NCIMB 11778 / NCTC 12712 / WDCM 00102 / Lb 14)</name>
    <dbReference type="NCBI Taxonomy" id="390333"/>
    <lineage>
        <taxon>Bacteria</taxon>
        <taxon>Bacillati</taxon>
        <taxon>Bacillota</taxon>
        <taxon>Bacilli</taxon>
        <taxon>Lactobacillales</taxon>
        <taxon>Lactobacillaceae</taxon>
        <taxon>Lactobacillus</taxon>
    </lineage>
</organism>
<protein>
    <recommendedName>
        <fullName evidence="1">Spermidine/putrescine import ATP-binding protein PotA</fullName>
        <ecNumber evidence="1">7.6.2.11</ecNumber>
    </recommendedName>
</protein>
<accession>Q1GB17</accession>
<reference key="1">
    <citation type="journal article" date="2006" name="Proc. Natl. Acad. Sci. U.S.A.">
        <title>The complete genome sequence of Lactobacillus bulgaricus reveals extensive and ongoing reductive evolution.</title>
        <authorList>
            <person name="van de Guchte M."/>
            <person name="Penaud S."/>
            <person name="Grimaldi C."/>
            <person name="Barbe V."/>
            <person name="Bryson K."/>
            <person name="Nicolas P."/>
            <person name="Robert C."/>
            <person name="Oztas S."/>
            <person name="Mangenot S."/>
            <person name="Couloux A."/>
            <person name="Loux V."/>
            <person name="Dervyn R."/>
            <person name="Bossy R."/>
            <person name="Bolotin A."/>
            <person name="Batto J.-M."/>
            <person name="Walunas T."/>
            <person name="Gibrat J.-F."/>
            <person name="Bessieres P."/>
            <person name="Weissenbach J."/>
            <person name="Ehrlich S.D."/>
            <person name="Maguin E."/>
        </authorList>
    </citation>
    <scope>NUCLEOTIDE SEQUENCE [LARGE SCALE GENOMIC DNA]</scope>
    <source>
        <strain>ATCC 11842 / DSM 20081 / BCRC 10696 / JCM 1002 / NBRC 13953 / NCIMB 11778 / NCTC 12712 / WDCM 00102 / Lb 14</strain>
    </source>
</reference>
<comment type="function">
    <text evidence="1">Part of the ABC transporter complex PotABCD involved in spermidine/putrescine import. Responsible for energy coupling to the transport system.</text>
</comment>
<comment type="catalytic activity">
    <reaction evidence="1">
        <text>ATP + H2O + polyamine-[polyamine-binding protein]Side 1 = ADP + phosphate + polyamineSide 2 + [polyamine-binding protein]Side 1.</text>
        <dbReference type="EC" id="7.6.2.11"/>
    </reaction>
</comment>
<comment type="subunit">
    <text evidence="1">The complex is composed of two ATP-binding proteins (PotA), two transmembrane proteins (PotB and PotC) and a solute-binding protein (PotD).</text>
</comment>
<comment type="subcellular location">
    <subcellularLocation>
        <location evidence="1">Cell membrane</location>
        <topology evidence="1">Peripheral membrane protein</topology>
    </subcellularLocation>
</comment>
<comment type="similarity">
    <text evidence="1">Belongs to the ABC transporter superfamily. Spermidine/putrescine importer (TC 3.A.1.11.1) family.</text>
</comment>
<comment type="sequence caution" evidence="2">
    <conflict type="erroneous initiation">
        <sequence resource="EMBL-CDS" id="CAI97476"/>
    </conflict>
</comment>
<feature type="chain" id="PRO_0000286229" description="Spermidine/putrescine import ATP-binding protein PotA">
    <location>
        <begin position="1"/>
        <end position="362"/>
    </location>
</feature>
<feature type="domain" description="ABC transporter" evidence="1">
    <location>
        <begin position="4"/>
        <end position="235"/>
    </location>
</feature>
<feature type="binding site" evidence="1">
    <location>
        <begin position="37"/>
        <end position="44"/>
    </location>
    <ligand>
        <name>ATP</name>
        <dbReference type="ChEBI" id="CHEBI:30616"/>
    </ligand>
</feature>
<name>POTA_LACDA</name>
<dbReference type="EC" id="7.6.2.11" evidence="1"/>
<dbReference type="EMBL" id="CR954253">
    <property type="protein sequence ID" value="CAI97476.1"/>
    <property type="status" value="ALT_INIT"/>
    <property type="molecule type" value="Genomic_DNA"/>
</dbReference>
<dbReference type="RefSeq" id="WP_003622729.1">
    <property type="nucleotide sequence ID" value="NZ_JQAV01000001.1"/>
</dbReference>
<dbReference type="SMR" id="Q1GB17"/>
<dbReference type="STRING" id="390333.Ldb0647"/>
<dbReference type="KEGG" id="ldb:Ldb0647"/>
<dbReference type="eggNOG" id="COG3842">
    <property type="taxonomic scope" value="Bacteria"/>
</dbReference>
<dbReference type="HOGENOM" id="CLU_000604_1_1_9"/>
<dbReference type="BioCyc" id="LDEL390333:LDB_RS02795-MONOMER"/>
<dbReference type="Proteomes" id="UP000001259">
    <property type="component" value="Chromosome"/>
</dbReference>
<dbReference type="GO" id="GO:0043190">
    <property type="term" value="C:ATP-binding cassette (ABC) transporter complex"/>
    <property type="evidence" value="ECO:0007669"/>
    <property type="project" value="InterPro"/>
</dbReference>
<dbReference type="GO" id="GO:0015594">
    <property type="term" value="F:ABC-type putrescine transporter activity"/>
    <property type="evidence" value="ECO:0007669"/>
    <property type="project" value="InterPro"/>
</dbReference>
<dbReference type="GO" id="GO:0005524">
    <property type="term" value="F:ATP binding"/>
    <property type="evidence" value="ECO:0007669"/>
    <property type="project" value="UniProtKB-KW"/>
</dbReference>
<dbReference type="GO" id="GO:0016887">
    <property type="term" value="F:ATP hydrolysis activity"/>
    <property type="evidence" value="ECO:0007669"/>
    <property type="project" value="InterPro"/>
</dbReference>
<dbReference type="CDD" id="cd03300">
    <property type="entry name" value="ABC_PotA_N"/>
    <property type="match status" value="1"/>
</dbReference>
<dbReference type="FunFam" id="3.40.50.300:FF:000133">
    <property type="entry name" value="Spermidine/putrescine import ATP-binding protein PotA"/>
    <property type="match status" value="1"/>
</dbReference>
<dbReference type="Gene3D" id="2.40.50.100">
    <property type="match status" value="1"/>
</dbReference>
<dbReference type="Gene3D" id="3.40.50.300">
    <property type="entry name" value="P-loop containing nucleotide triphosphate hydrolases"/>
    <property type="match status" value="1"/>
</dbReference>
<dbReference type="InterPro" id="IPR003593">
    <property type="entry name" value="AAA+_ATPase"/>
</dbReference>
<dbReference type="InterPro" id="IPR050093">
    <property type="entry name" value="ABC_SmlMolc_Importer"/>
</dbReference>
<dbReference type="InterPro" id="IPR003439">
    <property type="entry name" value="ABC_transporter-like_ATP-bd"/>
</dbReference>
<dbReference type="InterPro" id="IPR017871">
    <property type="entry name" value="ABC_transporter-like_CS"/>
</dbReference>
<dbReference type="InterPro" id="IPR008995">
    <property type="entry name" value="Mo/tungstate-bd_C_term_dom"/>
</dbReference>
<dbReference type="InterPro" id="IPR027417">
    <property type="entry name" value="P-loop_NTPase"/>
</dbReference>
<dbReference type="InterPro" id="IPR005893">
    <property type="entry name" value="PotA-like"/>
</dbReference>
<dbReference type="InterPro" id="IPR017879">
    <property type="entry name" value="PotA_ATP-bd"/>
</dbReference>
<dbReference type="InterPro" id="IPR013611">
    <property type="entry name" value="Transp-assoc_OB_typ2"/>
</dbReference>
<dbReference type="NCBIfam" id="TIGR01187">
    <property type="entry name" value="potA"/>
    <property type="match status" value="1"/>
</dbReference>
<dbReference type="PANTHER" id="PTHR42781">
    <property type="entry name" value="SPERMIDINE/PUTRESCINE IMPORT ATP-BINDING PROTEIN POTA"/>
    <property type="match status" value="1"/>
</dbReference>
<dbReference type="PANTHER" id="PTHR42781:SF4">
    <property type="entry name" value="SPERMIDINE_PUTRESCINE IMPORT ATP-BINDING PROTEIN POTA"/>
    <property type="match status" value="1"/>
</dbReference>
<dbReference type="Pfam" id="PF00005">
    <property type="entry name" value="ABC_tran"/>
    <property type="match status" value="1"/>
</dbReference>
<dbReference type="Pfam" id="PF08402">
    <property type="entry name" value="TOBE_2"/>
    <property type="match status" value="1"/>
</dbReference>
<dbReference type="SMART" id="SM00382">
    <property type="entry name" value="AAA"/>
    <property type="match status" value="1"/>
</dbReference>
<dbReference type="SUPFAM" id="SSF50331">
    <property type="entry name" value="MOP-like"/>
    <property type="match status" value="1"/>
</dbReference>
<dbReference type="SUPFAM" id="SSF52540">
    <property type="entry name" value="P-loop containing nucleoside triphosphate hydrolases"/>
    <property type="match status" value="1"/>
</dbReference>
<dbReference type="PROSITE" id="PS00211">
    <property type="entry name" value="ABC_TRANSPORTER_1"/>
    <property type="match status" value="1"/>
</dbReference>
<dbReference type="PROSITE" id="PS50893">
    <property type="entry name" value="ABC_TRANSPORTER_2"/>
    <property type="match status" value="1"/>
</dbReference>
<dbReference type="PROSITE" id="PS51305">
    <property type="entry name" value="POTA"/>
    <property type="match status" value="1"/>
</dbReference>
<evidence type="ECO:0000255" key="1">
    <source>
        <dbReference type="HAMAP-Rule" id="MF_01726"/>
    </source>
</evidence>
<evidence type="ECO:0000305" key="2"/>
<proteinExistence type="inferred from homology"/>